<proteinExistence type="inferred from homology"/>
<protein>
    <recommendedName>
        <fullName evidence="2">D-alanine--D-alanine ligase A</fullName>
        <ecNumber evidence="2">6.3.2.4</ecNumber>
    </recommendedName>
    <alternativeName>
        <fullName evidence="2">D-Ala-D-Ala ligase A</fullName>
    </alternativeName>
    <alternativeName>
        <fullName evidence="2">D-alanylalanine synthetase A</fullName>
    </alternativeName>
</protein>
<comment type="function">
    <text evidence="2">Cell wall formation.</text>
</comment>
<comment type="catalytic activity">
    <reaction evidence="2">
        <text>2 D-alanine + ATP = D-alanyl-D-alanine + ADP + phosphate + H(+)</text>
        <dbReference type="Rhea" id="RHEA:11224"/>
        <dbReference type="ChEBI" id="CHEBI:15378"/>
        <dbReference type="ChEBI" id="CHEBI:30616"/>
        <dbReference type="ChEBI" id="CHEBI:43474"/>
        <dbReference type="ChEBI" id="CHEBI:57416"/>
        <dbReference type="ChEBI" id="CHEBI:57822"/>
        <dbReference type="ChEBI" id="CHEBI:456216"/>
        <dbReference type="EC" id="6.3.2.4"/>
    </reaction>
</comment>
<comment type="cofactor">
    <cofactor evidence="1">
        <name>Mg(2+)</name>
        <dbReference type="ChEBI" id="CHEBI:18420"/>
    </cofactor>
    <cofactor evidence="1">
        <name>Mn(2+)</name>
        <dbReference type="ChEBI" id="CHEBI:29035"/>
    </cofactor>
    <text evidence="1">Binds 2 magnesium or manganese ions per subunit.</text>
</comment>
<comment type="pathway">
    <text evidence="2">Cell wall biogenesis; peptidoglycan biosynthesis.</text>
</comment>
<comment type="subcellular location">
    <subcellularLocation>
        <location evidence="2">Cytoplasm</location>
    </subcellularLocation>
</comment>
<comment type="similarity">
    <text evidence="2">Belongs to the D-alanine--D-alanine ligase family.</text>
</comment>
<accession>Q7NV72</accession>
<sequence length="366" mass="39309">MGKIRVGLIFGGQSSEHEVSLQSARNILQAIDGERFEVSLIGVDKQGRWHASQASNFLLNADDPGRIALRESGENLALVPGECSGQLQTAANAHPLAQIDVAFPIVHGTLGEDGSLQGLLRMANIPFVGAGVLGSAVCMDKDVAKRLLRDAGLKVAPFVSLTRSKAAGADLSAIVEQLGLPLFVKPANQGSSVGVSKVKREADLRAALDEAFRYDHKVLVEQAVIGREIECAVLGNERPRASGCGEIVLSDEFYAYDTKYLNEDGARVAVPADIPDEACQRIRGIAIEAFQALECSGMARVDVFLTPDGEVVINELNTLPGFTNISMYPKLWQAAGMSYRELITALIELALEKGRMDEALSRSCQY</sequence>
<organism>
    <name type="scientific">Chromobacterium violaceum (strain ATCC 12472 / DSM 30191 / JCM 1249 / CCUG 213 / NBRC 12614 / NCIMB 9131 / NCTC 9757 / MK)</name>
    <dbReference type="NCBI Taxonomy" id="243365"/>
    <lineage>
        <taxon>Bacteria</taxon>
        <taxon>Pseudomonadati</taxon>
        <taxon>Pseudomonadota</taxon>
        <taxon>Betaproteobacteria</taxon>
        <taxon>Neisseriales</taxon>
        <taxon>Chromobacteriaceae</taxon>
        <taxon>Chromobacterium</taxon>
    </lineage>
</organism>
<keyword id="KW-0067">ATP-binding</keyword>
<keyword id="KW-0133">Cell shape</keyword>
<keyword id="KW-0961">Cell wall biogenesis/degradation</keyword>
<keyword id="KW-0963">Cytoplasm</keyword>
<keyword id="KW-0436">Ligase</keyword>
<keyword id="KW-0460">Magnesium</keyword>
<keyword id="KW-0464">Manganese</keyword>
<keyword id="KW-0479">Metal-binding</keyword>
<keyword id="KW-0547">Nucleotide-binding</keyword>
<keyword id="KW-0573">Peptidoglycan synthesis</keyword>
<keyword id="KW-1185">Reference proteome</keyword>
<name>DDLA_CHRVO</name>
<gene>
    <name evidence="2" type="primary">ddlA</name>
    <name type="ordered locus">CV_2472</name>
</gene>
<feature type="chain" id="PRO_0000177805" description="D-alanine--D-alanine ligase A">
    <location>
        <begin position="1"/>
        <end position="366"/>
    </location>
</feature>
<feature type="domain" description="ATP-grasp" evidence="2">
    <location>
        <begin position="145"/>
        <end position="348"/>
    </location>
</feature>
<feature type="binding site" evidence="2">
    <location>
        <begin position="175"/>
        <end position="230"/>
    </location>
    <ligand>
        <name>ATP</name>
        <dbReference type="ChEBI" id="CHEBI:30616"/>
    </ligand>
</feature>
<feature type="binding site" evidence="2">
    <location>
        <position position="302"/>
    </location>
    <ligand>
        <name>Mg(2+)</name>
        <dbReference type="ChEBI" id="CHEBI:18420"/>
        <label>1</label>
    </ligand>
</feature>
<feature type="binding site" evidence="2">
    <location>
        <position position="315"/>
    </location>
    <ligand>
        <name>Mg(2+)</name>
        <dbReference type="ChEBI" id="CHEBI:18420"/>
        <label>1</label>
    </ligand>
</feature>
<feature type="binding site" evidence="2">
    <location>
        <position position="315"/>
    </location>
    <ligand>
        <name>Mg(2+)</name>
        <dbReference type="ChEBI" id="CHEBI:18420"/>
        <label>2</label>
    </ligand>
</feature>
<feature type="binding site" evidence="2">
    <location>
        <position position="317"/>
    </location>
    <ligand>
        <name>Mg(2+)</name>
        <dbReference type="ChEBI" id="CHEBI:18420"/>
        <label>2</label>
    </ligand>
</feature>
<evidence type="ECO:0000250" key="1"/>
<evidence type="ECO:0000255" key="2">
    <source>
        <dbReference type="HAMAP-Rule" id="MF_00047"/>
    </source>
</evidence>
<reference key="1">
    <citation type="journal article" date="2003" name="Proc. Natl. Acad. Sci. U.S.A.">
        <title>The complete genome sequence of Chromobacterium violaceum reveals remarkable and exploitable bacterial adaptability.</title>
        <authorList>
            <person name="Vasconcelos A.T.R."/>
            <person name="de Almeida D.F."/>
            <person name="Hungria M."/>
            <person name="Guimaraes C.T."/>
            <person name="Antonio R.V."/>
            <person name="Almeida F.C."/>
            <person name="de Almeida L.G.P."/>
            <person name="de Almeida R."/>
            <person name="Alves-Gomes J.A."/>
            <person name="Andrade E.M."/>
            <person name="Araripe J."/>
            <person name="de Araujo M.F.F."/>
            <person name="Astolfi-Filho S."/>
            <person name="Azevedo V."/>
            <person name="Baptista A.J."/>
            <person name="Bataus L.A.M."/>
            <person name="Batista J.S."/>
            <person name="Belo A."/>
            <person name="van den Berg C."/>
            <person name="Bogo M."/>
            <person name="Bonatto S."/>
            <person name="Bordignon J."/>
            <person name="Brigido M.M."/>
            <person name="Brito C.A."/>
            <person name="Brocchi M."/>
            <person name="Burity H.A."/>
            <person name="Camargo A.A."/>
            <person name="Cardoso D.D.P."/>
            <person name="Carneiro N.P."/>
            <person name="Carraro D.M."/>
            <person name="Carvalho C.M.B."/>
            <person name="Cascardo J.C.M."/>
            <person name="Cavada B.S."/>
            <person name="Chueire L.M.O."/>
            <person name="Creczynski-Pasa T.B."/>
            <person name="Cunha-Junior N.C."/>
            <person name="Fagundes N."/>
            <person name="Falcao C.L."/>
            <person name="Fantinatti F."/>
            <person name="Farias I.P."/>
            <person name="Felipe M.S.S."/>
            <person name="Ferrari L.P."/>
            <person name="Ferro J.A."/>
            <person name="Ferro M.I.T."/>
            <person name="Franco G.R."/>
            <person name="Freitas N.S.A."/>
            <person name="Furlan L.R."/>
            <person name="Gazzinelli R.T."/>
            <person name="Gomes E.A."/>
            <person name="Goncalves P.R."/>
            <person name="Grangeiro T.B."/>
            <person name="Grattapaglia D."/>
            <person name="Grisard E.C."/>
            <person name="Hanna E.S."/>
            <person name="Jardim S.N."/>
            <person name="Laurino J."/>
            <person name="Leoi L.C.T."/>
            <person name="Lima L.F.A."/>
            <person name="Loureiro M.F."/>
            <person name="Lyra M.C.C.P."/>
            <person name="Madeira H.M.F."/>
            <person name="Manfio G.P."/>
            <person name="Maranhao A.Q."/>
            <person name="Martins W.S."/>
            <person name="di Mauro S.M.Z."/>
            <person name="de Medeiros S.R.B."/>
            <person name="Meissner R.V."/>
            <person name="Moreira M.A.M."/>
            <person name="Nascimento F.F."/>
            <person name="Nicolas M.F."/>
            <person name="Oliveira J.G."/>
            <person name="Oliveira S.C."/>
            <person name="Paixao R.F.C."/>
            <person name="Parente J.A."/>
            <person name="Pedrosa F.O."/>
            <person name="Pena S.D.J."/>
            <person name="Pereira J.O."/>
            <person name="Pereira M."/>
            <person name="Pinto L.S.R.C."/>
            <person name="Pinto L.S."/>
            <person name="Porto J.I.R."/>
            <person name="Potrich D.P."/>
            <person name="Ramalho-Neto C.E."/>
            <person name="Reis A.M.M."/>
            <person name="Rigo L.U."/>
            <person name="Rondinelli E."/>
            <person name="Santos E.B.P."/>
            <person name="Santos F.R."/>
            <person name="Schneider M.P.C."/>
            <person name="Seuanez H.N."/>
            <person name="Silva A.M.R."/>
            <person name="da Silva A.L.C."/>
            <person name="Silva D.W."/>
            <person name="Silva R."/>
            <person name="Simoes I.C."/>
            <person name="Simon D."/>
            <person name="Soares C.M.A."/>
            <person name="Soares R.B.A."/>
            <person name="Souza E.M."/>
            <person name="Souza K.R.L."/>
            <person name="Souza R.C."/>
            <person name="Steffens M.B.R."/>
            <person name="Steindel M."/>
            <person name="Teixeira S.R."/>
            <person name="Urmenyi T."/>
            <person name="Vettore A."/>
            <person name="Wassem R."/>
            <person name="Zaha A."/>
            <person name="Simpson A.J.G."/>
        </authorList>
    </citation>
    <scope>NUCLEOTIDE SEQUENCE [LARGE SCALE GENOMIC DNA]</scope>
    <source>
        <strain>ATCC 12472 / DSM 30191 / JCM 1249 / CCUG 213 / NBRC 12614 / NCIMB 9131 / NCTC 9757 / MK</strain>
    </source>
</reference>
<dbReference type="EC" id="6.3.2.4" evidence="2"/>
<dbReference type="EMBL" id="AE016825">
    <property type="protein sequence ID" value="AAQ60143.1"/>
    <property type="molecule type" value="Genomic_DNA"/>
</dbReference>
<dbReference type="RefSeq" id="WP_011136019.1">
    <property type="nucleotide sequence ID" value="NC_005085.1"/>
</dbReference>
<dbReference type="SMR" id="Q7NV72"/>
<dbReference type="STRING" id="243365.CV_2472"/>
<dbReference type="KEGG" id="cvi:CV_2472"/>
<dbReference type="eggNOG" id="COG1181">
    <property type="taxonomic scope" value="Bacteria"/>
</dbReference>
<dbReference type="HOGENOM" id="CLU_039268_0_0_4"/>
<dbReference type="OrthoDB" id="9813261at2"/>
<dbReference type="UniPathway" id="UPA00219"/>
<dbReference type="Proteomes" id="UP000001424">
    <property type="component" value="Chromosome"/>
</dbReference>
<dbReference type="GO" id="GO:0005829">
    <property type="term" value="C:cytosol"/>
    <property type="evidence" value="ECO:0007669"/>
    <property type="project" value="TreeGrafter"/>
</dbReference>
<dbReference type="GO" id="GO:0005524">
    <property type="term" value="F:ATP binding"/>
    <property type="evidence" value="ECO:0007669"/>
    <property type="project" value="UniProtKB-KW"/>
</dbReference>
<dbReference type="GO" id="GO:0008716">
    <property type="term" value="F:D-alanine-D-alanine ligase activity"/>
    <property type="evidence" value="ECO:0007669"/>
    <property type="project" value="UniProtKB-UniRule"/>
</dbReference>
<dbReference type="GO" id="GO:0046872">
    <property type="term" value="F:metal ion binding"/>
    <property type="evidence" value="ECO:0007669"/>
    <property type="project" value="UniProtKB-KW"/>
</dbReference>
<dbReference type="GO" id="GO:0071555">
    <property type="term" value="P:cell wall organization"/>
    <property type="evidence" value="ECO:0007669"/>
    <property type="project" value="UniProtKB-KW"/>
</dbReference>
<dbReference type="GO" id="GO:0009252">
    <property type="term" value="P:peptidoglycan biosynthetic process"/>
    <property type="evidence" value="ECO:0007669"/>
    <property type="project" value="UniProtKB-UniRule"/>
</dbReference>
<dbReference type="GO" id="GO:0008360">
    <property type="term" value="P:regulation of cell shape"/>
    <property type="evidence" value="ECO:0007669"/>
    <property type="project" value="UniProtKB-KW"/>
</dbReference>
<dbReference type="FunFam" id="3.30.1490.20:FF:000007">
    <property type="entry name" value="D-alanine--D-alanine ligase"/>
    <property type="match status" value="1"/>
</dbReference>
<dbReference type="FunFam" id="3.30.470.20:FF:000008">
    <property type="entry name" value="D-alanine--D-alanine ligase"/>
    <property type="match status" value="1"/>
</dbReference>
<dbReference type="Gene3D" id="3.40.50.20">
    <property type="match status" value="1"/>
</dbReference>
<dbReference type="Gene3D" id="3.30.1490.20">
    <property type="entry name" value="ATP-grasp fold, A domain"/>
    <property type="match status" value="1"/>
</dbReference>
<dbReference type="Gene3D" id="3.30.470.20">
    <property type="entry name" value="ATP-grasp fold, B domain"/>
    <property type="match status" value="1"/>
</dbReference>
<dbReference type="HAMAP" id="MF_00047">
    <property type="entry name" value="Dala_Dala_lig"/>
    <property type="match status" value="1"/>
</dbReference>
<dbReference type="InterPro" id="IPR011761">
    <property type="entry name" value="ATP-grasp"/>
</dbReference>
<dbReference type="InterPro" id="IPR013815">
    <property type="entry name" value="ATP_grasp_subdomain_1"/>
</dbReference>
<dbReference type="InterPro" id="IPR000291">
    <property type="entry name" value="D-Ala_lig_Van_CS"/>
</dbReference>
<dbReference type="InterPro" id="IPR005905">
    <property type="entry name" value="D_ala_D_ala"/>
</dbReference>
<dbReference type="InterPro" id="IPR011095">
    <property type="entry name" value="Dala_Dala_lig_C"/>
</dbReference>
<dbReference type="InterPro" id="IPR011127">
    <property type="entry name" value="Dala_Dala_lig_N"/>
</dbReference>
<dbReference type="InterPro" id="IPR016185">
    <property type="entry name" value="PreATP-grasp_dom_sf"/>
</dbReference>
<dbReference type="NCBIfam" id="TIGR01205">
    <property type="entry name" value="D_ala_D_alaTIGR"/>
    <property type="match status" value="1"/>
</dbReference>
<dbReference type="NCBIfam" id="NF002378">
    <property type="entry name" value="PRK01372.1"/>
    <property type="match status" value="1"/>
</dbReference>
<dbReference type="NCBIfam" id="NF002525">
    <property type="entry name" value="PRK01966.1-1"/>
    <property type="match status" value="1"/>
</dbReference>
<dbReference type="NCBIfam" id="NF002528">
    <property type="entry name" value="PRK01966.1-4"/>
    <property type="match status" value="1"/>
</dbReference>
<dbReference type="PANTHER" id="PTHR23132">
    <property type="entry name" value="D-ALANINE--D-ALANINE LIGASE"/>
    <property type="match status" value="1"/>
</dbReference>
<dbReference type="PANTHER" id="PTHR23132:SF25">
    <property type="entry name" value="D-ALANINE--D-ALANINE LIGASE A"/>
    <property type="match status" value="1"/>
</dbReference>
<dbReference type="Pfam" id="PF07478">
    <property type="entry name" value="Dala_Dala_lig_C"/>
    <property type="match status" value="1"/>
</dbReference>
<dbReference type="Pfam" id="PF01820">
    <property type="entry name" value="Dala_Dala_lig_N"/>
    <property type="match status" value="1"/>
</dbReference>
<dbReference type="PIRSF" id="PIRSF039102">
    <property type="entry name" value="Ddl/VanB"/>
    <property type="match status" value="1"/>
</dbReference>
<dbReference type="SUPFAM" id="SSF56059">
    <property type="entry name" value="Glutathione synthetase ATP-binding domain-like"/>
    <property type="match status" value="1"/>
</dbReference>
<dbReference type="SUPFAM" id="SSF52440">
    <property type="entry name" value="PreATP-grasp domain"/>
    <property type="match status" value="1"/>
</dbReference>
<dbReference type="PROSITE" id="PS50975">
    <property type="entry name" value="ATP_GRASP"/>
    <property type="match status" value="1"/>
</dbReference>
<dbReference type="PROSITE" id="PS00843">
    <property type="entry name" value="DALA_DALA_LIGASE_1"/>
    <property type="match status" value="1"/>
</dbReference>
<dbReference type="PROSITE" id="PS00844">
    <property type="entry name" value="DALA_DALA_LIGASE_2"/>
    <property type="match status" value="1"/>
</dbReference>